<proteinExistence type="evidence at protein level"/>
<comment type="function">
    <molecule>Leader protein</molecule>
    <text evidence="6">Forms a complex with host RAN and probably binds to exportins carrying activated MAPK in order to mediate the hyperphosphorylation of host Phe/Gly containing nuclear pore proteins (Nups) resulting in cessation of active nucleocytoplasmic transport (By similarity). Proteins with NLS signals fail to import, cellular mRNAs fail to export, and some proteins small enough for diffusion are not retained anymore (efflux) (By similarity). The resulting inhibition of cellular protein synthesis serves to ensure maximal viral gene expression and to evade host immune response (By similarity).</text>
</comment>
<comment type="function">
    <molecule>Capsid protein VP1</molecule>
    <text evidence="4">Forms an icosahedral capsid of pseudo T=3 symmetry with capsid proteins VP2 and VP3. Together they form an icosahedral capsid composed of 60 copies of each VP1, VP2, and VP3, with a diameter of approximately 300 Angstroms. VP4 lies on the inner surface of the protein shell formed by VP1, VP2 and VP3. All the three latter proteins contain a beta-sheet structure called beta-barrel jelly roll. VP1 is situated at the 12 fivefold axes, whereas VP2 and VP3 are located at the quasi-sixfold axes.</text>
</comment>
<comment type="function">
    <molecule>Capsid protein VP2</molecule>
    <text evidence="4">Forms an icosahedral capsid of pseudo T=3 symmetry with capsid proteins VP2 and VP3. Together they form an icosahedral capsid composed of 60 copies of each VP1, VP2, and VP3, with a diameter of approximately 300 Angstroms. VP4 lies on the inner surface of the protein shell formed by VP1, VP2 and VP3. All the three latter proteins contain a beta-sheet structure called beta-barrel jelly roll. VP1 is situated at the 12 fivefold axes, whereas VP2 and VP3 are located at the quasi-sixfold axes.</text>
</comment>
<comment type="function">
    <molecule>Capsid protein VP3</molecule>
    <text evidence="4">Forms an icosahedral capsid of pseudo T=3 symmetry with capsid proteins VP2 and VP3. Together they form an icosahedral capsid composed of 60 copies of each VP1, VP2, and VP3, with a diameter of approximately 300 Angstroms. VP4 lies on the inner surface of the protein shell formed by VP1, VP2 and VP3. All the three latter proteins contain a beta-sheet structure called beta-barrel jelly roll. VP1 is situated at the 12 fivefold axes, whereas VP2 and VP3 are located at the quasi-sixfold axes.</text>
</comment>
<comment type="function">
    <molecule>Capsid protein VP4</molecule>
    <text evidence="1 4">Lies on the inner surface of the capsid shell (By similarity). After binding to the host receptor, the capsid undergoes conformational changes (By similarity). Capsid protein VP4 is released, capsid protein VP1 N-terminus is externalized, and together, they shape a pore in the host membrane through which the viral genome is translocated into the host cell cytoplasm (By similarity). After genome has been released, the channel shrinks (By similarity).</text>
</comment>
<comment type="function">
    <molecule>Capsid protein VP0</molecule>
    <text evidence="3">VP0 precursor is a component of immature procapsids.</text>
</comment>
<comment type="subunit">
    <molecule>Leader protein</molecule>
    <text evidence="6">Interacts with host RAN; the complex L-RAN recruits cellular kinases responsible for the L-induced nucleocytoplasmic trafficking inhibition (By similarity). Interacts with the protein 2A (By similarity).</text>
</comment>
<comment type="subcellular location">
    <molecule>Capsid protein VP2</molecule>
    <subcellularLocation>
        <location evidence="4">Virion</location>
    </subcellularLocation>
    <subcellularLocation>
        <location evidence="9">Host cytoplasm</location>
    </subcellularLocation>
</comment>
<comment type="subcellular location">
    <molecule>Capsid protein VP3</molecule>
    <subcellularLocation>
        <location evidence="4">Virion</location>
    </subcellularLocation>
    <subcellularLocation>
        <location evidence="9">Host cytoplasm</location>
    </subcellularLocation>
</comment>
<comment type="subcellular location">
    <molecule>Capsid protein VP1</molecule>
    <subcellularLocation>
        <location evidence="4">Virion</location>
    </subcellularLocation>
    <subcellularLocation>
        <location evidence="9">Host cytoplasm</location>
    </subcellularLocation>
</comment>
<comment type="PTM">
    <molecule>Leader protein</molecule>
    <text evidence="6">Phosphorylated.</text>
</comment>
<comment type="PTM">
    <molecule>Genome polyprotein</molecule>
    <text evidence="2">Specific enzymatic cleavages by the viral protease in vivo yield a variety of precursors and mature proteins (By similarity). The polyprotein seems to be cotranslationally cleaved at the 2A/2B junction by a ribosomal skip from one codon to the next without formation of a peptide bond (By similarity). This process would release the P1-2A peptide from the translational complex (By similarity).</text>
</comment>
<comment type="PTM">
    <molecule>Capsid protein VP0</molecule>
    <text evidence="1">During virion maturation, immature virions are rendered infectious following cleavage of VP0 into VP4 and VP2. This maturation seems to be an autocatalytic event triggered by the presence of RNA in the capsid and is followed by a conformational change of the particle.</text>
</comment>
<comment type="PTM">
    <molecule>Capsid protein VP4</molecule>
    <text evidence="5">Myristoylation is required during RNA encapsidation and formation of the mature virus particle.</text>
</comment>
<comment type="similarity">
    <text evidence="9">Belongs to the picornaviruses polyprotein family.</text>
</comment>
<keyword id="KW-0002">3D-structure</keyword>
<keyword id="KW-0167">Capsid protein</keyword>
<keyword id="KW-1035">Host cytoplasm</keyword>
<keyword id="KW-0945">Host-virus interaction</keyword>
<keyword id="KW-0449">Lipoprotein</keyword>
<keyword id="KW-0479">Metal-binding</keyword>
<keyword id="KW-0519">Myristate</keyword>
<keyword id="KW-1143">T=pseudo3 icosahedral capsid protein</keyword>
<keyword id="KW-1161">Viral attachment to host cell</keyword>
<keyword id="KW-0946">Virion</keyword>
<keyword id="KW-1160">Virus entry into host cell</keyword>
<keyword id="KW-0862">Zinc</keyword>
<keyword id="KW-0863">Zinc-finger</keyword>
<accession>P32540</accession>
<name>POLG_ENMG3</name>
<organismHost>
    <name type="scientific">Homo sapiens</name>
    <name type="common">Human</name>
    <dbReference type="NCBI Taxonomy" id="9606"/>
</organismHost>
<organismHost>
    <name type="scientific">Mus musculus</name>
    <name type="common">Mouse</name>
    <dbReference type="NCBI Taxonomy" id="10090"/>
</organismHost>
<feature type="chain" id="PRO_0000446091" description="Genome polyprotein">
    <location>
        <begin position="1"/>
        <end position="901" status="greater than"/>
    </location>
</feature>
<feature type="chain" id="PRO_0000446092" description="Leader protein">
    <location>
        <begin position="1"/>
        <end position="67"/>
    </location>
</feature>
<feature type="chain" id="PRO_0000310966" description="Capsid protein VP0">
    <location>
        <begin position="68"/>
        <end position="393"/>
    </location>
</feature>
<feature type="chain" id="PRO_0000039776" description="Capsid protein VP4">
    <location>
        <begin position="68"/>
        <end position="137"/>
    </location>
</feature>
<feature type="chain" id="PRO_0000039777" description="Capsid protein VP2">
    <location>
        <begin position="138"/>
        <end position="393"/>
    </location>
</feature>
<feature type="chain" id="PRO_0000039778" description="Capsid protein VP3">
    <location>
        <begin position="394"/>
        <end position="624"/>
    </location>
</feature>
<feature type="chain" id="PRO_0000039779" description="Capsid protein VP1">
    <location>
        <begin position="625"/>
        <end position="901"/>
    </location>
</feature>
<feature type="zinc finger region" evidence="8">
    <location>
        <begin position="10"/>
        <end position="22"/>
    </location>
</feature>
<feature type="binding site" evidence="4">
    <location>
        <position position="22"/>
    </location>
    <ligand>
        <name>RNA</name>
        <dbReference type="ChEBI" id="CHEBI:33697"/>
    </ligand>
</feature>
<feature type="binding site" evidence="4">
    <location>
        <position position="46"/>
    </location>
    <ligand>
        <name>RNA</name>
        <dbReference type="ChEBI" id="CHEBI:33697"/>
    </ligand>
</feature>
<feature type="binding site" evidence="4">
    <location>
        <position position="47"/>
    </location>
    <ligand>
        <name>RNA</name>
        <dbReference type="ChEBI" id="CHEBI:33697"/>
    </ligand>
</feature>
<feature type="binding site" evidence="4">
    <location>
        <position position="48"/>
    </location>
    <ligand>
        <name>RNA</name>
        <dbReference type="ChEBI" id="CHEBI:33697"/>
    </ligand>
</feature>
<feature type="binding site" evidence="4">
    <location>
        <position position="49"/>
    </location>
    <ligand>
        <name>RNA</name>
        <dbReference type="ChEBI" id="CHEBI:33697"/>
    </ligand>
</feature>
<feature type="binding site" evidence="4">
    <location>
        <position position="50"/>
    </location>
    <ligand>
        <name>RNA</name>
        <dbReference type="ChEBI" id="CHEBI:33697"/>
    </ligand>
</feature>
<feature type="binding site" evidence="4">
    <location>
        <position position="69"/>
    </location>
    <ligand>
        <name>RNA</name>
        <dbReference type="ChEBI" id="CHEBI:33697"/>
    </ligand>
</feature>
<feature type="binding site" evidence="4">
    <location>
        <position position="70"/>
    </location>
    <ligand>
        <name>RNA</name>
        <dbReference type="ChEBI" id="CHEBI:33697"/>
    </ligand>
</feature>
<feature type="binding site" evidence="4">
    <location>
        <position position="93"/>
    </location>
    <ligand>
        <name>RNA</name>
        <dbReference type="ChEBI" id="CHEBI:33697"/>
    </ligand>
</feature>
<feature type="binding site" evidence="4">
    <location>
        <position position="95"/>
    </location>
    <ligand>
        <name>RNA</name>
        <dbReference type="ChEBI" id="CHEBI:33697"/>
    </ligand>
</feature>
<feature type="binding site" evidence="4">
    <location>
        <position position="97"/>
    </location>
    <ligand>
        <name>RNA</name>
        <dbReference type="ChEBI" id="CHEBI:33697"/>
    </ligand>
</feature>
<feature type="binding site" evidence="4">
    <location>
        <position position="100"/>
    </location>
    <ligand>
        <name>RNA</name>
        <dbReference type="ChEBI" id="CHEBI:33697"/>
    </ligand>
</feature>
<feature type="site" description="Cleavage" evidence="7">
    <location>
        <begin position="137"/>
        <end position="138"/>
    </location>
</feature>
<feature type="site" description="Cleavage; by protease 3C" evidence="2">
    <location>
        <begin position="393"/>
        <end position="394"/>
    </location>
</feature>
<feature type="site" description="Cleavage; by protease 3C" evidence="2">
    <location>
        <begin position="624"/>
        <end position="625"/>
    </location>
</feature>
<feature type="lipid moiety-binding region" description="N-myristoyl glycine; by host" evidence="5">
    <location>
        <position position="68"/>
    </location>
</feature>
<feature type="non-terminal residue">
    <location>
        <position position="901"/>
    </location>
</feature>
<feature type="strand" evidence="11">
    <location>
        <begin position="11"/>
        <end position="14"/>
    </location>
</feature>
<feature type="helix" evidence="11">
    <location>
        <begin position="16"/>
        <end position="18"/>
    </location>
</feature>
<feature type="helix" evidence="11">
    <location>
        <begin position="19"/>
        <end position="23"/>
    </location>
</feature>
<feature type="strand" evidence="11">
    <location>
        <begin position="25"/>
        <end position="27"/>
    </location>
</feature>
<organism>
    <name type="scientific">Mengo encephalomyocarditis virus (strain 37A)</name>
    <dbReference type="NCBI Taxonomy" id="31702"/>
    <lineage>
        <taxon>Viruses</taxon>
        <taxon>Riboviria</taxon>
        <taxon>Orthornavirae</taxon>
        <taxon>Pisuviricota</taxon>
        <taxon>Pisoniviricetes</taxon>
        <taxon>Picornavirales</taxon>
        <taxon>Picornaviridae</taxon>
        <taxon>Caphthovirinae</taxon>
        <taxon>Cardiovirus</taxon>
        <taxon>Cardiovirus A</taxon>
    </lineage>
</organism>
<dbReference type="EMBL" id="M88547">
    <property type="protein sequence ID" value="AAB59755.1"/>
    <property type="molecule type" value="Genomic_RNA"/>
</dbReference>
<dbReference type="PIR" id="A43379">
    <property type="entry name" value="GNNYMV"/>
</dbReference>
<dbReference type="PDB" id="2BAI">
    <property type="method" value="NMR"/>
    <property type="chains" value="A=1-32"/>
</dbReference>
<dbReference type="PDBsum" id="2BAI"/>
<dbReference type="BMRB" id="P32540"/>
<dbReference type="SMR" id="P32540"/>
<dbReference type="EvolutionaryTrace" id="P32540"/>
<dbReference type="GO" id="GO:0030430">
    <property type="term" value="C:host cell cytoplasm"/>
    <property type="evidence" value="ECO:0007669"/>
    <property type="project" value="UniProtKB-SubCell"/>
</dbReference>
<dbReference type="GO" id="GO:0039618">
    <property type="term" value="C:T=pseudo3 icosahedral viral capsid"/>
    <property type="evidence" value="ECO:0007669"/>
    <property type="project" value="UniProtKB-KW"/>
</dbReference>
<dbReference type="GO" id="GO:0005198">
    <property type="term" value="F:structural molecule activity"/>
    <property type="evidence" value="ECO:0007669"/>
    <property type="project" value="InterPro"/>
</dbReference>
<dbReference type="GO" id="GO:0008270">
    <property type="term" value="F:zinc ion binding"/>
    <property type="evidence" value="ECO:0007669"/>
    <property type="project" value="UniProtKB-KW"/>
</dbReference>
<dbReference type="GO" id="GO:0046718">
    <property type="term" value="P:symbiont entry into host cell"/>
    <property type="evidence" value="ECO:0007669"/>
    <property type="project" value="UniProtKB-KW"/>
</dbReference>
<dbReference type="GO" id="GO:0019062">
    <property type="term" value="P:virion attachment to host cell"/>
    <property type="evidence" value="ECO:0007669"/>
    <property type="project" value="UniProtKB-KW"/>
</dbReference>
<dbReference type="CDD" id="cd00205">
    <property type="entry name" value="rhv_like"/>
    <property type="match status" value="3"/>
</dbReference>
<dbReference type="FunFam" id="2.60.120.20:FF:000009">
    <property type="entry name" value="Genome polyprotein"/>
    <property type="match status" value="1"/>
</dbReference>
<dbReference type="FunFam" id="2.60.120.20:FF:000013">
    <property type="entry name" value="Genome polyprotein"/>
    <property type="match status" value="1"/>
</dbReference>
<dbReference type="FunFam" id="4.10.90.10:FF:000002">
    <property type="entry name" value="Genome polyprotein"/>
    <property type="match status" value="1"/>
</dbReference>
<dbReference type="Gene3D" id="2.60.120.20">
    <property type="match status" value="3"/>
</dbReference>
<dbReference type="Gene3D" id="4.10.90.10">
    <property type="entry name" value="Capsid protein VP4 superfamily, Picornavirus"/>
    <property type="match status" value="1"/>
</dbReference>
<dbReference type="InterPro" id="IPR015031">
    <property type="entry name" value="Capsid_VP4_Picornavir"/>
</dbReference>
<dbReference type="InterPro" id="IPR037080">
    <property type="entry name" value="Capsid_VP4_sf_Picornavirus"/>
</dbReference>
<dbReference type="InterPro" id="IPR021573">
    <property type="entry name" value="Leader_pept_picornaV"/>
</dbReference>
<dbReference type="InterPro" id="IPR001676">
    <property type="entry name" value="Picornavirus_capsid"/>
</dbReference>
<dbReference type="InterPro" id="IPR033703">
    <property type="entry name" value="Rhv-like"/>
</dbReference>
<dbReference type="InterPro" id="IPR029053">
    <property type="entry name" value="Viral_coat"/>
</dbReference>
<dbReference type="InterPro" id="IPR037243">
    <property type="entry name" value="Viral_lead_polypep_zc_finger"/>
</dbReference>
<dbReference type="Pfam" id="PF00073">
    <property type="entry name" value="Rhv"/>
    <property type="match status" value="2"/>
</dbReference>
<dbReference type="Pfam" id="PF22663">
    <property type="entry name" value="Rhv_5"/>
    <property type="match status" value="1"/>
</dbReference>
<dbReference type="Pfam" id="PF08935">
    <property type="entry name" value="VP4_2"/>
    <property type="match status" value="1"/>
</dbReference>
<dbReference type="Pfam" id="PF11475">
    <property type="entry name" value="VP_N-CPKC"/>
    <property type="match status" value="1"/>
</dbReference>
<dbReference type="SUPFAM" id="SSF88633">
    <property type="entry name" value="Positive stranded ssRNA viruses"/>
    <property type="match status" value="2"/>
</dbReference>
<dbReference type="SUPFAM" id="SSF144251">
    <property type="entry name" value="Viral leader polypeptide zinc finger"/>
    <property type="match status" value="1"/>
</dbReference>
<reference key="1">
    <citation type="journal article" date="1992" name="Virology">
        <title>Molecular and structural basis of hemagglutination in mengovirus.</title>
        <authorList>
            <person name="Mann L.M."/>
            <person name="Anderson K."/>
            <person name="Luo M."/>
            <person name="Bond C.W."/>
        </authorList>
    </citation>
    <scope>NUCLEOTIDE SEQUENCE [GENOMIC RNA]</scope>
</reference>
<reference evidence="10" key="2">
    <citation type="journal article" date="2008" name="FEBS Lett.">
        <title>NMR structure of the mengovirus Leader protein zinc-finger domain.</title>
        <authorList>
            <person name="Cornilescu C.C."/>
            <person name="Porter F.W."/>
            <person name="Zhao K.Q."/>
            <person name="Palmenberg A.C."/>
            <person name="Markley J.L."/>
        </authorList>
    </citation>
    <scope>STRUCTURE BY NMR OF 1-32</scope>
    <scope>ZINC-FINGER</scope>
</reference>
<evidence type="ECO:0000250" key="1">
    <source>
        <dbReference type="UniProtKB" id="P03300"/>
    </source>
</evidence>
<evidence type="ECO:0000250" key="2">
    <source>
        <dbReference type="UniProtKB" id="P03304"/>
    </source>
</evidence>
<evidence type="ECO:0000250" key="3">
    <source>
        <dbReference type="UniProtKB" id="P08617"/>
    </source>
</evidence>
<evidence type="ECO:0000250" key="4">
    <source>
        <dbReference type="UniProtKB" id="P12296"/>
    </source>
</evidence>
<evidence type="ECO:0000250" key="5">
    <source>
        <dbReference type="UniProtKB" id="Q66282"/>
    </source>
</evidence>
<evidence type="ECO:0000250" key="6">
    <source>
        <dbReference type="UniProtKB" id="Q66765"/>
    </source>
</evidence>
<evidence type="ECO:0000255" key="7"/>
<evidence type="ECO:0000269" key="8">
    <source>
    </source>
</evidence>
<evidence type="ECO:0000305" key="9"/>
<evidence type="ECO:0007744" key="10">
    <source>
        <dbReference type="PDB" id="2BAI"/>
    </source>
</evidence>
<evidence type="ECO:0007829" key="11">
    <source>
        <dbReference type="PDB" id="2BAI"/>
    </source>
</evidence>
<protein>
    <recommendedName>
        <fullName>Genome polyprotein</fullName>
    </recommendedName>
    <component>
        <recommendedName>
            <fullName>Leader protein</fullName>
            <shortName>L</shortName>
        </recommendedName>
    </component>
    <component>
        <recommendedName>
            <fullName>Capsid protein VP0</fullName>
        </recommendedName>
        <alternativeName>
            <fullName>VP4-VP2</fullName>
        </alternativeName>
    </component>
    <component>
        <recommendedName>
            <fullName>Capsid protein VP4</fullName>
        </recommendedName>
        <alternativeName>
            <fullName>P1A</fullName>
        </alternativeName>
        <alternativeName>
            <fullName>Rho</fullName>
        </alternativeName>
        <alternativeName>
            <fullName>Virion protein 4</fullName>
        </alternativeName>
    </component>
    <component>
        <recommendedName>
            <fullName>Capsid protein VP2</fullName>
        </recommendedName>
        <alternativeName>
            <fullName>Beta</fullName>
        </alternativeName>
        <alternativeName>
            <fullName>P1B</fullName>
        </alternativeName>
        <alternativeName>
            <fullName>Virion protein 2</fullName>
        </alternativeName>
    </component>
    <component>
        <recommendedName>
            <fullName>Capsid protein VP3</fullName>
        </recommendedName>
        <alternativeName>
            <fullName>Gamma</fullName>
        </alternativeName>
        <alternativeName>
            <fullName>P1C</fullName>
        </alternativeName>
        <alternativeName>
            <fullName>Virion protein 3</fullName>
        </alternativeName>
    </component>
    <component>
        <recommendedName>
            <fullName>Capsid protein VP1</fullName>
        </recommendedName>
        <alternativeName>
            <fullName>Alpha</fullName>
        </alternativeName>
        <alternativeName>
            <fullName>P1D</fullName>
        </alternativeName>
        <alternativeName>
            <fullName>Virion protein 1</fullName>
        </alternativeName>
    </component>
</protein>
<sequence>MATTMEQEICAHSMTFEECPKCSALQYRNGFYLLKYDEEWYPEELLTDGEDDVFDPDLDIEVVFETQGNSTSSDKNNSSSEGNEGVIINNFYSNQYQNSIDLSANATGSDPPKTYGQFSNLLSGAVNAFSNMLPLLADQNTEEMENLSDRVSQDTAGNTVTNTQSTVGRLVGYGTVHDGEHPASCADTASEKILAVERYYTFKVNDWTSTQKPFEYIRIPLPHVLSGEDGGVFGAALRRHYLVKTGWRVQVQCNASQFHAGSLLVFMAPEYPTLDVFAMDNKWSKDNLPNGTRTQANRKGPFAMDHQNFWQWTLYPHQFLNLRTNTTVDLEVPYVNIAPTSSWTQHASWTLVIAVVAPLTYSTGASTSLDITASIQPVRPVFNGLRHEVLSRQSPIPVTIREHAGTWYSTLPDSTVPIYGKTPVAPANYMVGEYKDFLEIAQIPTFIGNKVPNAVPYIEASNTAVKTQPLAVYQVTLSCSCLANTFLAALSRNFAQYRGSLVYTFVFTGTAMMKGKFLIAYTPPGAGKPTSRDQAMQATYAIWDLGLNSSYSFTVPFISPTHFRMVGTDLVNITNADGWVTVWQLTPLTYPPGCPTSAKILTMVSAGKDFSLKMPISPAPWSPQGVENAEKGVTENTDATADFVAQPVYLPENQTKVAFFYDRSSPIGAFTVKSGSLESGFAPFSNQACPNSVILTPGPQFDPAYDQLRPQRLTEIWGNGNEETSEVFPLKTKQDYSFCLFSPFVYYKCDLEVTLSPHTSGNHGLLVRWCPTGTPNKPTTQVLHEVSSLSEGRTPQVYSAGPGTSNQISFVVPYNSPLSVLPAVWYNGHKRFDNTGYLGIAPNSDFGTLFFAGTKPDIKFTVYLRYKNMRVFCPRPTVFFPWPTSGDKIDMTPRAGVLMLE</sequence>